<proteinExistence type="evidence at protein level"/>
<name>AMP1_PITHY</name>
<comment type="function">
    <text evidence="1">Has antimicrobial activity against the Gram-positive bacterium M.luteus.</text>
</comment>
<comment type="subcellular location">
    <subcellularLocation>
        <location evidence="1">Secreted</location>
    </subcellularLocation>
</comment>
<comment type="tissue specificity">
    <text>Expressed by the skin glands.</text>
</comment>
<comment type="mass spectrometry" mass="1335.87" error="0.01" method="Electrospray" evidence="1"/>
<accession>P84524</accession>
<dbReference type="GO" id="GO:0005576">
    <property type="term" value="C:extracellular region"/>
    <property type="evidence" value="ECO:0007669"/>
    <property type="project" value="UniProtKB-SubCell"/>
</dbReference>
<dbReference type="GO" id="GO:0042742">
    <property type="term" value="P:defense response to bacterium"/>
    <property type="evidence" value="ECO:0007669"/>
    <property type="project" value="UniProtKB-KW"/>
</dbReference>
<protein>
    <recommendedName>
        <fullName evidence="2">Antimicrobial peptide 1</fullName>
    </recommendedName>
</protein>
<reference key="1">
    <citation type="submission" date="2005-04" db="UniProtKB">
        <title>Antimicrobial peptides derived from the venom of the South American tree frog, Phyllomedusa hypochondrialis.</title>
        <authorList>
            <person name="Thompson A.H."/>
        </authorList>
    </citation>
    <scope>PROTEIN SEQUENCE</scope>
    <scope>FUNCTION</scope>
    <scope>MASS SPECTROMETRY</scope>
    <scope>SUBCELLULAR LOCATION</scope>
    <source>
        <tissue>Venom</tissue>
    </source>
</reference>
<sequence length="12" mass="1337">LRPAVIVRTKAL</sequence>
<organism>
    <name type="scientific">Pithecopus hypochondrialis</name>
    <name type="common">Orange-legged leaf frog</name>
    <name type="synonym">Phyllomedusa hypochondrialis</name>
    <dbReference type="NCBI Taxonomy" id="317381"/>
    <lineage>
        <taxon>Eukaryota</taxon>
        <taxon>Metazoa</taxon>
        <taxon>Chordata</taxon>
        <taxon>Craniata</taxon>
        <taxon>Vertebrata</taxon>
        <taxon>Euteleostomi</taxon>
        <taxon>Amphibia</taxon>
        <taxon>Batrachia</taxon>
        <taxon>Anura</taxon>
        <taxon>Neobatrachia</taxon>
        <taxon>Hyloidea</taxon>
        <taxon>Hylidae</taxon>
        <taxon>Phyllomedusinae</taxon>
        <taxon>Pithecopus</taxon>
    </lineage>
</organism>
<evidence type="ECO:0000269" key="1">
    <source ref="1"/>
</evidence>
<evidence type="ECO:0000303" key="2">
    <source ref="1"/>
</evidence>
<feature type="peptide" id="PRO_0000043870" description="Antimicrobial peptide 1" evidence="1">
    <location>
        <begin position="1"/>
        <end position="12"/>
    </location>
</feature>
<feature type="unsure residue" description="L or I" evidence="2">
    <location>
        <position position="12"/>
    </location>
</feature>
<keyword id="KW-0878">Amphibian defense peptide</keyword>
<keyword id="KW-0044">Antibiotic</keyword>
<keyword id="KW-0929">Antimicrobial</keyword>
<keyword id="KW-0903">Direct protein sequencing</keyword>
<keyword id="KW-0964">Secreted</keyword>